<feature type="chain" id="PRO_0000236693" description="Tyrosine--tRNA ligase">
    <location>
        <begin position="1"/>
        <end position="412"/>
    </location>
</feature>
<feature type="domain" description="S4 RNA-binding" evidence="1">
    <location>
        <begin position="351"/>
        <end position="412"/>
    </location>
</feature>
<feature type="short sequence motif" description="'HIGH' region">
    <location>
        <begin position="56"/>
        <end position="65"/>
    </location>
</feature>
<feature type="short sequence motif" description="'KMSKS' region">
    <location>
        <begin position="240"/>
        <end position="244"/>
    </location>
</feature>
<feature type="binding site" evidence="1">
    <location>
        <position position="243"/>
    </location>
    <ligand>
        <name>ATP</name>
        <dbReference type="ChEBI" id="CHEBI:30616"/>
    </ligand>
</feature>
<reference key="1">
    <citation type="journal article" date="2000" name="Nucleic Acids Res.">
        <title>Complete genome sequence of the alkaliphilic bacterium Bacillus halodurans and genomic sequence comparison with Bacillus subtilis.</title>
        <authorList>
            <person name="Takami H."/>
            <person name="Nakasone K."/>
            <person name="Takaki Y."/>
            <person name="Maeno G."/>
            <person name="Sasaki R."/>
            <person name="Masui N."/>
            <person name="Fuji F."/>
            <person name="Hirama C."/>
            <person name="Nakamura Y."/>
            <person name="Ogasawara N."/>
            <person name="Kuhara S."/>
            <person name="Horikoshi K."/>
        </authorList>
    </citation>
    <scope>NUCLEOTIDE SEQUENCE [LARGE SCALE GENOMIC DNA]</scope>
    <source>
        <strain>ATCC BAA-125 / DSM 18197 / FERM 7344 / JCM 9153 / C-125</strain>
    </source>
</reference>
<comment type="function">
    <text evidence="1">Catalyzes the attachment of tyrosine to tRNA(Tyr) in a two-step reaction: tyrosine is first activated by ATP to form Tyr-AMP and then transferred to the acceptor end of tRNA(Tyr).</text>
</comment>
<comment type="catalytic activity">
    <reaction evidence="1">
        <text>tRNA(Tyr) + L-tyrosine + ATP = L-tyrosyl-tRNA(Tyr) + AMP + diphosphate + H(+)</text>
        <dbReference type="Rhea" id="RHEA:10220"/>
        <dbReference type="Rhea" id="RHEA-COMP:9706"/>
        <dbReference type="Rhea" id="RHEA-COMP:9707"/>
        <dbReference type="ChEBI" id="CHEBI:15378"/>
        <dbReference type="ChEBI" id="CHEBI:30616"/>
        <dbReference type="ChEBI" id="CHEBI:33019"/>
        <dbReference type="ChEBI" id="CHEBI:58315"/>
        <dbReference type="ChEBI" id="CHEBI:78442"/>
        <dbReference type="ChEBI" id="CHEBI:78536"/>
        <dbReference type="ChEBI" id="CHEBI:456215"/>
        <dbReference type="EC" id="6.1.1.1"/>
    </reaction>
</comment>
<comment type="subunit">
    <text evidence="1">Homodimer.</text>
</comment>
<comment type="subcellular location">
    <subcellularLocation>
        <location evidence="1">Cytoplasm</location>
    </subcellularLocation>
</comment>
<comment type="similarity">
    <text evidence="1">Belongs to the class-I aminoacyl-tRNA synthetase family. TyrS type 2 subfamily.</text>
</comment>
<name>SYY_HALH5</name>
<dbReference type="EC" id="6.1.1.1" evidence="1"/>
<dbReference type="EMBL" id="BA000004">
    <property type="protein sequence ID" value="BAB06947.1"/>
    <property type="molecule type" value="Genomic_DNA"/>
</dbReference>
<dbReference type="PIR" id="D84053">
    <property type="entry name" value="D84053"/>
</dbReference>
<dbReference type="RefSeq" id="WP_010899371.1">
    <property type="nucleotide sequence ID" value="NC_002570.2"/>
</dbReference>
<dbReference type="SMR" id="Q9K7X9"/>
<dbReference type="STRING" id="272558.gene:10729140"/>
<dbReference type="GeneID" id="87598747"/>
<dbReference type="KEGG" id="bha:BH3228"/>
<dbReference type="eggNOG" id="COG0162">
    <property type="taxonomic scope" value="Bacteria"/>
</dbReference>
<dbReference type="HOGENOM" id="CLU_024003_5_0_9"/>
<dbReference type="OrthoDB" id="9804243at2"/>
<dbReference type="Proteomes" id="UP000001258">
    <property type="component" value="Chromosome"/>
</dbReference>
<dbReference type="GO" id="GO:0005829">
    <property type="term" value="C:cytosol"/>
    <property type="evidence" value="ECO:0007669"/>
    <property type="project" value="TreeGrafter"/>
</dbReference>
<dbReference type="GO" id="GO:0005524">
    <property type="term" value="F:ATP binding"/>
    <property type="evidence" value="ECO:0007669"/>
    <property type="project" value="UniProtKB-UniRule"/>
</dbReference>
<dbReference type="GO" id="GO:0003723">
    <property type="term" value="F:RNA binding"/>
    <property type="evidence" value="ECO:0007669"/>
    <property type="project" value="UniProtKB-KW"/>
</dbReference>
<dbReference type="GO" id="GO:0004831">
    <property type="term" value="F:tyrosine-tRNA ligase activity"/>
    <property type="evidence" value="ECO:0007669"/>
    <property type="project" value="UniProtKB-UniRule"/>
</dbReference>
<dbReference type="GO" id="GO:0006437">
    <property type="term" value="P:tyrosyl-tRNA aminoacylation"/>
    <property type="evidence" value="ECO:0007669"/>
    <property type="project" value="UniProtKB-UniRule"/>
</dbReference>
<dbReference type="CDD" id="cd00165">
    <property type="entry name" value="S4"/>
    <property type="match status" value="1"/>
</dbReference>
<dbReference type="CDD" id="cd00805">
    <property type="entry name" value="TyrRS_core"/>
    <property type="match status" value="1"/>
</dbReference>
<dbReference type="FunFam" id="1.10.240.10:FF:000006">
    <property type="entry name" value="Tyrosine--tRNA ligase"/>
    <property type="match status" value="1"/>
</dbReference>
<dbReference type="FunFam" id="3.10.290.10:FF:000022">
    <property type="entry name" value="Tyrosine--tRNA ligase"/>
    <property type="match status" value="1"/>
</dbReference>
<dbReference type="FunFam" id="3.40.50.620:FF:000061">
    <property type="entry name" value="Tyrosine--tRNA ligase"/>
    <property type="match status" value="1"/>
</dbReference>
<dbReference type="Gene3D" id="3.40.50.620">
    <property type="entry name" value="HUPs"/>
    <property type="match status" value="1"/>
</dbReference>
<dbReference type="Gene3D" id="3.10.290.10">
    <property type="entry name" value="RNA-binding S4 domain"/>
    <property type="match status" value="1"/>
</dbReference>
<dbReference type="Gene3D" id="1.10.240.10">
    <property type="entry name" value="Tyrosyl-Transfer RNA Synthetase"/>
    <property type="match status" value="1"/>
</dbReference>
<dbReference type="HAMAP" id="MF_02007">
    <property type="entry name" value="Tyr_tRNA_synth_type2"/>
    <property type="match status" value="1"/>
</dbReference>
<dbReference type="InterPro" id="IPR001412">
    <property type="entry name" value="aa-tRNA-synth_I_CS"/>
</dbReference>
<dbReference type="InterPro" id="IPR002305">
    <property type="entry name" value="aa-tRNA-synth_Ic"/>
</dbReference>
<dbReference type="InterPro" id="IPR014729">
    <property type="entry name" value="Rossmann-like_a/b/a_fold"/>
</dbReference>
<dbReference type="InterPro" id="IPR002942">
    <property type="entry name" value="S4_RNA-bd"/>
</dbReference>
<dbReference type="InterPro" id="IPR036986">
    <property type="entry name" value="S4_RNA-bd_sf"/>
</dbReference>
<dbReference type="InterPro" id="IPR054608">
    <property type="entry name" value="SYY-like_C"/>
</dbReference>
<dbReference type="InterPro" id="IPR002307">
    <property type="entry name" value="Tyr-tRNA-ligase"/>
</dbReference>
<dbReference type="InterPro" id="IPR024088">
    <property type="entry name" value="Tyr-tRNA-ligase_bac-type"/>
</dbReference>
<dbReference type="InterPro" id="IPR024108">
    <property type="entry name" value="Tyr-tRNA-ligase_bac_2"/>
</dbReference>
<dbReference type="NCBIfam" id="TIGR00234">
    <property type="entry name" value="tyrS"/>
    <property type="match status" value="1"/>
</dbReference>
<dbReference type="PANTHER" id="PTHR11766:SF1">
    <property type="entry name" value="TYROSINE--TRNA LIGASE"/>
    <property type="match status" value="1"/>
</dbReference>
<dbReference type="PANTHER" id="PTHR11766">
    <property type="entry name" value="TYROSYL-TRNA SYNTHETASE"/>
    <property type="match status" value="1"/>
</dbReference>
<dbReference type="Pfam" id="PF22421">
    <property type="entry name" value="SYY_C-terminal"/>
    <property type="match status" value="1"/>
</dbReference>
<dbReference type="Pfam" id="PF00579">
    <property type="entry name" value="tRNA-synt_1b"/>
    <property type="match status" value="1"/>
</dbReference>
<dbReference type="PRINTS" id="PR01040">
    <property type="entry name" value="TRNASYNTHTYR"/>
</dbReference>
<dbReference type="SMART" id="SM00363">
    <property type="entry name" value="S4"/>
    <property type="match status" value="1"/>
</dbReference>
<dbReference type="SUPFAM" id="SSF55174">
    <property type="entry name" value="Alpha-L RNA-binding motif"/>
    <property type="match status" value="1"/>
</dbReference>
<dbReference type="SUPFAM" id="SSF52374">
    <property type="entry name" value="Nucleotidylyl transferase"/>
    <property type="match status" value="1"/>
</dbReference>
<dbReference type="PROSITE" id="PS00178">
    <property type="entry name" value="AA_TRNA_LIGASE_I"/>
    <property type="match status" value="1"/>
</dbReference>
<dbReference type="PROSITE" id="PS50889">
    <property type="entry name" value="S4"/>
    <property type="match status" value="1"/>
</dbReference>
<sequence>MEEKALTPEQTQEVERQLEILKRGVVEIVPEEALREKIEKSVRTGKPLKVKLGMDPSAPDVHIGHTVVLHKLRQFQDLGHEVQMLIGDFTGRIGDPSGKSETRKQLTDEQVKANARTYVEQYGKILDMEKATLHYNSKWLSALNFEDVIKLASQMTVARMLERDDFEKRYKSGQPISIHEFFYPLMQGYDSVALESDIEIGGTDQKFNLLMGRMLQEAYGNDKQVAITMPLIEGLDGERKMSKSLNNYIGIDEAPNEIFGKAMSIPDELMVKYYELATDLSMDEVKAIAKGLEDGSVHPRDAKMKLGATLVRMYHGEKEAEEAVNYFKTVFQKRDLPTDIPEVKWDGESPVWIVDLLVTLDLLPSKGEARRMVQNGGVKLNGEKVEDVQLQVEIEDGLIVQVGKRKFKKLVR</sequence>
<proteinExistence type="inferred from homology"/>
<protein>
    <recommendedName>
        <fullName evidence="1">Tyrosine--tRNA ligase</fullName>
        <ecNumber evidence="1">6.1.1.1</ecNumber>
    </recommendedName>
    <alternativeName>
        <fullName evidence="1">Tyrosyl-tRNA synthetase</fullName>
        <shortName evidence="1">TyrRS</shortName>
    </alternativeName>
</protein>
<gene>
    <name evidence="1" type="primary">tyrS</name>
    <name type="ordered locus">BH3228</name>
</gene>
<accession>Q9K7X9</accession>
<keyword id="KW-0030">Aminoacyl-tRNA synthetase</keyword>
<keyword id="KW-0067">ATP-binding</keyword>
<keyword id="KW-0963">Cytoplasm</keyword>
<keyword id="KW-0436">Ligase</keyword>
<keyword id="KW-0547">Nucleotide-binding</keyword>
<keyword id="KW-0648">Protein biosynthesis</keyword>
<keyword id="KW-1185">Reference proteome</keyword>
<keyword id="KW-0694">RNA-binding</keyword>
<organism>
    <name type="scientific">Halalkalibacterium halodurans (strain ATCC BAA-125 / DSM 18197 / FERM 7344 / JCM 9153 / C-125)</name>
    <name type="common">Bacillus halodurans</name>
    <dbReference type="NCBI Taxonomy" id="272558"/>
    <lineage>
        <taxon>Bacteria</taxon>
        <taxon>Bacillati</taxon>
        <taxon>Bacillota</taxon>
        <taxon>Bacilli</taxon>
        <taxon>Bacillales</taxon>
        <taxon>Bacillaceae</taxon>
        <taxon>Halalkalibacterium (ex Joshi et al. 2022)</taxon>
    </lineage>
</organism>
<evidence type="ECO:0000255" key="1">
    <source>
        <dbReference type="HAMAP-Rule" id="MF_02007"/>
    </source>
</evidence>